<dbReference type="EMBL" id="CP000382">
    <property type="protein sequence ID" value="ABK61290.1"/>
    <property type="molecule type" value="Genomic_DNA"/>
</dbReference>
<dbReference type="RefSeq" id="WP_011723260.1">
    <property type="nucleotide sequence ID" value="NC_008593.1"/>
</dbReference>
<dbReference type="SMR" id="A0Q3T6"/>
<dbReference type="STRING" id="386415.NT01CX_0852"/>
<dbReference type="KEGG" id="cno:NT01CX_0852"/>
<dbReference type="PATRIC" id="fig|386415.7.peg.2324"/>
<dbReference type="eggNOG" id="COG1615">
    <property type="taxonomic scope" value="Bacteria"/>
</dbReference>
<dbReference type="HOGENOM" id="CLU_007733_0_0_9"/>
<dbReference type="Proteomes" id="UP000008220">
    <property type="component" value="Chromosome"/>
</dbReference>
<dbReference type="GO" id="GO:0005576">
    <property type="term" value="C:extracellular region"/>
    <property type="evidence" value="ECO:0007669"/>
    <property type="project" value="TreeGrafter"/>
</dbReference>
<dbReference type="GO" id="GO:0005886">
    <property type="term" value="C:plasma membrane"/>
    <property type="evidence" value="ECO:0007669"/>
    <property type="project" value="UniProtKB-SubCell"/>
</dbReference>
<dbReference type="HAMAP" id="MF_01600">
    <property type="entry name" value="UPF0182"/>
    <property type="match status" value="1"/>
</dbReference>
<dbReference type="InterPro" id="IPR005372">
    <property type="entry name" value="UPF0182"/>
</dbReference>
<dbReference type="NCBIfam" id="NF000825">
    <property type="entry name" value="PRK00068.1"/>
    <property type="match status" value="1"/>
</dbReference>
<dbReference type="PANTHER" id="PTHR39344">
    <property type="entry name" value="UPF0182 PROTEIN SLL1060"/>
    <property type="match status" value="1"/>
</dbReference>
<dbReference type="PANTHER" id="PTHR39344:SF1">
    <property type="entry name" value="UPF0182 PROTEIN SLL1060"/>
    <property type="match status" value="1"/>
</dbReference>
<dbReference type="Pfam" id="PF03699">
    <property type="entry name" value="UPF0182"/>
    <property type="match status" value="1"/>
</dbReference>
<accession>A0Q3T6</accession>
<reference key="1">
    <citation type="journal article" date="2006" name="Nat. Biotechnol.">
        <title>The genome and transcriptomes of the anti-tumor agent Clostridium novyi-NT.</title>
        <authorList>
            <person name="Bettegowda C."/>
            <person name="Huang X."/>
            <person name="Lin J."/>
            <person name="Cheong I."/>
            <person name="Kohli M."/>
            <person name="Szabo S.A."/>
            <person name="Zhang X."/>
            <person name="Diaz L.A. Jr."/>
            <person name="Velculescu V.E."/>
            <person name="Parmigiani G."/>
            <person name="Kinzler K.W."/>
            <person name="Vogelstein B."/>
            <person name="Zhou S."/>
        </authorList>
    </citation>
    <scope>NUCLEOTIDE SEQUENCE [LARGE SCALE GENOMIC DNA]</scope>
    <source>
        <strain>NT</strain>
    </source>
</reference>
<name>Y852_CLONN</name>
<comment type="subcellular location">
    <subcellularLocation>
        <location evidence="1">Cell membrane</location>
        <topology evidence="1">Multi-pass membrane protein</topology>
    </subcellularLocation>
</comment>
<comment type="similarity">
    <text evidence="1">Belongs to the UPF0182 family.</text>
</comment>
<gene>
    <name type="ordered locus">NT01CX_0852</name>
</gene>
<sequence>MRKNKVLIGLFFCIALTVIFLKKIVNVIINIKWFREVGYLSVYLKRFTSVISLFILVFLICFVAIKTYCRSIKKNLSKNESFIDVDIESKSKGKKIINALTLIISLFIALNFSLGYWDKILEFMNSSKFNVKDPIFNMDISFFIFKLPLIESIYNSLLSLLILLAVITVIVYMFLNIKDRVTLGHKIDRNFININNFKSGITKFAGKQLAILGALLLLCISVGYLIKAWNLSYSPRGVAFGASYTDTKITLKFYIAISIVSIISSIIVAFSILKSKVKPIISCVILIAVLVISERVVSGAWQMLVVKSNERRLETPFIEYNMKYTKKAFGIANVKEQLYPLTNVLNKKSLENNKETINNIKINSVGQALEFYNQVESKKNYYIFNDIDIDRYKINGKYNQVFIAPREIDYEKLQEKANTWQNKHLTYTHGYGVVMSKVNSVTAEGKPDFVIKDMPLVNTSGVEIKDPRIYYGEKTNEYAIVNTKLNEMDYLKDSGENATKNYDGDSGIKMSFINRILFAINKGDMKFLLSSDITSDSRILMNRNIVNRVKKIAPFLKYDNNPYIVINNGKLYWVIDAYTVSNAYPFSEPIGDINYMRNSVKVIIDAVNGTTNFYIIDKNDPIISTYSKIFPGLFKNESEIKEGFREHFKYPQDYFAIQCKAMERYHVKNSGTFFSGQNVWDVAKTQKDIDGKKSVNEASYLIMKLPGEKNEEMILLQYFNQYQRENMIALFGARMDNSNYGNLVLYKFPTTKSETVNSPILFKQKIKQDTTISKELSLWDAKGSQVQFGDTMIIPIDNSLLYVEPLYLRADSERSIPEMKRVIVAYGDKLILAENIEKALSQLFDYDKKNDAKEEVILNKKESVPDELKDAKELYEKAIEAQKQGNWAEYGENIKRLGDILNKLNHPK</sequence>
<feature type="chain" id="PRO_0000291274" description="UPF0182 protein NT01CX_0852">
    <location>
        <begin position="1"/>
        <end position="908"/>
    </location>
</feature>
<feature type="transmembrane region" description="Helical" evidence="1">
    <location>
        <begin position="8"/>
        <end position="28"/>
    </location>
</feature>
<feature type="transmembrane region" description="Helical" evidence="1">
    <location>
        <begin position="47"/>
        <end position="67"/>
    </location>
</feature>
<feature type="transmembrane region" description="Helical" evidence="1">
    <location>
        <begin position="96"/>
        <end position="116"/>
    </location>
</feature>
<feature type="transmembrane region" description="Helical" evidence="1">
    <location>
        <begin position="157"/>
        <end position="177"/>
    </location>
</feature>
<feature type="transmembrane region" description="Helical" evidence="1">
    <location>
        <begin position="209"/>
        <end position="229"/>
    </location>
</feature>
<feature type="transmembrane region" description="Helical" evidence="1">
    <location>
        <begin position="253"/>
        <end position="273"/>
    </location>
</feature>
<feature type="transmembrane region" description="Helical" evidence="1">
    <location>
        <begin position="280"/>
        <end position="300"/>
    </location>
</feature>
<evidence type="ECO:0000255" key="1">
    <source>
        <dbReference type="HAMAP-Rule" id="MF_01600"/>
    </source>
</evidence>
<organism>
    <name type="scientific">Clostridium novyi (strain NT)</name>
    <dbReference type="NCBI Taxonomy" id="386415"/>
    <lineage>
        <taxon>Bacteria</taxon>
        <taxon>Bacillati</taxon>
        <taxon>Bacillota</taxon>
        <taxon>Clostridia</taxon>
        <taxon>Eubacteriales</taxon>
        <taxon>Clostridiaceae</taxon>
        <taxon>Clostridium</taxon>
    </lineage>
</organism>
<keyword id="KW-1003">Cell membrane</keyword>
<keyword id="KW-0472">Membrane</keyword>
<keyword id="KW-1185">Reference proteome</keyword>
<keyword id="KW-0812">Transmembrane</keyword>
<keyword id="KW-1133">Transmembrane helix</keyword>
<protein>
    <recommendedName>
        <fullName evidence="1">UPF0182 protein NT01CX_0852</fullName>
    </recommendedName>
</protein>
<proteinExistence type="inferred from homology"/>